<proteinExistence type="evidence at protein level"/>
<name>CA159_HUMAN</name>
<comment type="interaction">
    <interactant intactId="EBI-17586094">
        <id>Q96HA4-2</id>
    </interactant>
    <interactant intactId="EBI-355727">
        <id>P02786</id>
        <label>TFRC</label>
    </interactant>
    <organismsDiffer>false</organismsDiffer>
    <experiments>3</experiments>
</comment>
<comment type="interaction">
    <interactant intactId="EBI-17586094">
        <id>Q96HA4-2</id>
    </interactant>
    <interactant intactId="EBI-10826510">
        <id>Q96B49</id>
        <label>TOMM6</label>
    </interactant>
    <organismsDiffer>false</organismsDiffer>
    <experiments>3</experiments>
</comment>
<comment type="subcellular location">
    <subcellularLocation>
        <location evidence="6">Membrane</location>
        <topology evidence="6">Single-pass membrane protein</topology>
    </subcellularLocation>
</comment>
<comment type="alternative products">
    <event type="alternative splicing"/>
    <isoform>
        <id>Q96HA4-1</id>
        <name>1</name>
        <sequence type="displayed"/>
    </isoform>
    <isoform>
        <id>Q96HA4-2</id>
        <name>2</name>
        <sequence type="described" ref="VSP_021281 VSP_021282 VSP_021285"/>
    </isoform>
    <isoform>
        <id>Q96HA4-3</id>
        <name>3</name>
        <sequence type="described" ref="VSP_021281 VSP_021284 VSP_021286"/>
    </isoform>
    <isoform>
        <id>Q96HA4-4</id>
        <name>4</name>
        <sequence type="described" ref="VSP_021281 VSP_021283"/>
    </isoform>
    <isoform>
        <id>Q96HA4-5</id>
        <name>5</name>
        <sequence type="described" ref="VSP_021280"/>
    </isoform>
</comment>
<organism>
    <name type="scientific">Homo sapiens</name>
    <name type="common">Human</name>
    <dbReference type="NCBI Taxonomy" id="9606"/>
    <lineage>
        <taxon>Eukaryota</taxon>
        <taxon>Metazoa</taxon>
        <taxon>Chordata</taxon>
        <taxon>Craniata</taxon>
        <taxon>Vertebrata</taxon>
        <taxon>Euteleostomi</taxon>
        <taxon>Mammalia</taxon>
        <taxon>Eutheria</taxon>
        <taxon>Euarchontoglires</taxon>
        <taxon>Primates</taxon>
        <taxon>Haplorrhini</taxon>
        <taxon>Catarrhini</taxon>
        <taxon>Hominidae</taxon>
        <taxon>Homo</taxon>
    </lineage>
</organism>
<feature type="signal peptide" evidence="1">
    <location>
        <begin position="1"/>
        <end position="18"/>
    </location>
</feature>
<feature type="chain" id="PRO_0000255250" description="Uncharacterized protein C1orf159">
    <location>
        <begin position="19"/>
        <end position="380"/>
    </location>
</feature>
<feature type="transmembrane region" description="Helical" evidence="1">
    <location>
        <begin position="148"/>
        <end position="168"/>
    </location>
</feature>
<feature type="region of interest" description="Disordered" evidence="2">
    <location>
        <begin position="229"/>
        <end position="256"/>
    </location>
</feature>
<feature type="region of interest" description="Disordered" evidence="2">
    <location>
        <begin position="336"/>
        <end position="380"/>
    </location>
</feature>
<feature type="compositionally biased region" description="Pro residues" evidence="2">
    <location>
        <begin position="240"/>
        <end position="249"/>
    </location>
</feature>
<feature type="compositionally biased region" description="Basic and acidic residues" evidence="2">
    <location>
        <begin position="356"/>
        <end position="366"/>
    </location>
</feature>
<feature type="glycosylation site" description="N-linked (GlcNAc...) asparagine" evidence="1">
    <location>
        <position position="104"/>
    </location>
</feature>
<feature type="glycosylation site" description="N-linked (GlcNAc...) asparagine" evidence="1">
    <location>
        <position position="111"/>
    </location>
</feature>
<feature type="glycosylation site" description="N-linked (GlcNAc...) asparagine" evidence="1">
    <location>
        <position position="128"/>
    </location>
</feature>
<feature type="splice variant" id="VSP_021280" description="In isoform 5." evidence="4">
    <location>
        <begin position="1"/>
        <end position="126"/>
    </location>
</feature>
<feature type="splice variant" id="VSP_021281" description="In isoform 2, isoform 3 and isoform 4." evidence="3 4 5">
    <location>
        <begin position="25"/>
        <end position="60"/>
    </location>
</feature>
<feature type="splice variant" id="VSP_021282" description="In isoform 2." evidence="5">
    <original>APALQPGEAAAMIPPPQSSGNSSCRIPLWGFPSLGQS</original>
    <variation>GPAPAGSLPGRWSSQQFGPQAPALQPGEAVSNPHHPG</variation>
    <location>
        <begin position="185"/>
        <end position="221"/>
    </location>
</feature>
<feature type="splice variant" id="VSP_021283" description="In isoform 4." evidence="4">
    <location>
        <begin position="204"/>
        <end position="349"/>
    </location>
</feature>
<feature type="splice variant" id="VSP_021284" description="In isoform 3." evidence="3">
    <original>GNSSCRIPLWGFPSLGQSQGAL</original>
    <variation>DVGSAGKEDPPRQGRPPIPAPP</variation>
    <location>
        <begin position="204"/>
        <end position="225"/>
    </location>
</feature>
<feature type="splice variant" id="VSP_021285" description="In isoform 2." evidence="5">
    <location>
        <begin position="222"/>
        <end position="380"/>
    </location>
</feature>
<feature type="splice variant" id="VSP_021286" description="In isoform 3." evidence="3">
    <location>
        <begin position="226"/>
        <end position="380"/>
    </location>
</feature>
<sequence length="380" mass="40283">MALRHLALLAGLLVGVASKSMENTVTRNSTAVINTQAEGTLSPPGLSSLPVVREWALTHTAQLPECCVDVVGVNASCPGASLCGPGCYRRWNADGSASCVRCGNGTLPAYNGSECRSFAGPGAPFPMNRSSGTPGRPHPGAPRVAASLFLGTFFISSGLILSVAGFFYLKRSSKLPRACYRRNKAPALQPGEAAAMIPPPQSSGNSSCRIPLWGFPSLGQSQGALWVCPQTGLPGSGSRPPLPGSPGDPPTRQGQGRIWLVPPALDLSWIWPAPPARPPLIPVTSMLFPVPETWGLQERRTHHDRADPQYLLLLEVQLHPRTDAAGLRQALLSSHRFSGAGSGGPKSQPVRKPRYVRRERPLDRATDPAAFPGEARISNV</sequence>
<evidence type="ECO:0000255" key="1"/>
<evidence type="ECO:0000256" key="2">
    <source>
        <dbReference type="SAM" id="MobiDB-lite"/>
    </source>
</evidence>
<evidence type="ECO:0000303" key="3">
    <source>
    </source>
</evidence>
<evidence type="ECO:0000303" key="4">
    <source>
    </source>
</evidence>
<evidence type="ECO:0000303" key="5">
    <source>
    </source>
</evidence>
<evidence type="ECO:0000305" key="6"/>
<keyword id="KW-0025">Alternative splicing</keyword>
<keyword id="KW-0325">Glycoprotein</keyword>
<keyword id="KW-0472">Membrane</keyword>
<keyword id="KW-1267">Proteomics identification</keyword>
<keyword id="KW-1185">Reference proteome</keyword>
<keyword id="KW-0732">Signal</keyword>
<keyword id="KW-0812">Transmembrane</keyword>
<keyword id="KW-1133">Transmembrane helix</keyword>
<reference key="1">
    <citation type="journal article" date="2003" name="Genome Res.">
        <title>The secreted protein discovery initiative (SPDI), a large-scale effort to identify novel human secreted and transmembrane proteins: a bioinformatics assessment.</title>
        <authorList>
            <person name="Clark H.F."/>
            <person name="Gurney A.L."/>
            <person name="Abaya E."/>
            <person name="Baker K."/>
            <person name="Baldwin D.T."/>
            <person name="Brush J."/>
            <person name="Chen J."/>
            <person name="Chow B."/>
            <person name="Chui C."/>
            <person name="Crowley C."/>
            <person name="Currell B."/>
            <person name="Deuel B."/>
            <person name="Dowd P."/>
            <person name="Eaton D."/>
            <person name="Foster J.S."/>
            <person name="Grimaldi C."/>
            <person name="Gu Q."/>
            <person name="Hass P.E."/>
            <person name="Heldens S."/>
            <person name="Huang A."/>
            <person name="Kim H.S."/>
            <person name="Klimowski L."/>
            <person name="Jin Y."/>
            <person name="Johnson S."/>
            <person name="Lee J."/>
            <person name="Lewis L."/>
            <person name="Liao D."/>
            <person name="Mark M.R."/>
            <person name="Robbie E."/>
            <person name="Sanchez C."/>
            <person name="Schoenfeld J."/>
            <person name="Seshagiri S."/>
            <person name="Simmons L."/>
            <person name="Singh J."/>
            <person name="Smith V."/>
            <person name="Stinson J."/>
            <person name="Vagts A."/>
            <person name="Vandlen R.L."/>
            <person name="Watanabe C."/>
            <person name="Wieand D."/>
            <person name="Woods K."/>
            <person name="Xie M.-H."/>
            <person name="Yansura D.G."/>
            <person name="Yi S."/>
            <person name="Yu G."/>
            <person name="Yuan J."/>
            <person name="Zhang M."/>
            <person name="Zhang Z."/>
            <person name="Goddard A.D."/>
            <person name="Wood W.I."/>
            <person name="Godowski P.J."/>
            <person name="Gray A.M."/>
        </authorList>
    </citation>
    <scope>NUCLEOTIDE SEQUENCE [LARGE SCALE MRNA] (ISOFORM 3)</scope>
</reference>
<reference key="2">
    <citation type="journal article" date="2004" name="Nat. Genet.">
        <title>Complete sequencing and characterization of 21,243 full-length human cDNAs.</title>
        <authorList>
            <person name="Ota T."/>
            <person name="Suzuki Y."/>
            <person name="Nishikawa T."/>
            <person name="Otsuki T."/>
            <person name="Sugiyama T."/>
            <person name="Irie R."/>
            <person name="Wakamatsu A."/>
            <person name="Hayashi K."/>
            <person name="Sato H."/>
            <person name="Nagai K."/>
            <person name="Kimura K."/>
            <person name="Makita H."/>
            <person name="Sekine M."/>
            <person name="Obayashi M."/>
            <person name="Nishi T."/>
            <person name="Shibahara T."/>
            <person name="Tanaka T."/>
            <person name="Ishii S."/>
            <person name="Yamamoto J."/>
            <person name="Saito K."/>
            <person name="Kawai Y."/>
            <person name="Isono Y."/>
            <person name="Nakamura Y."/>
            <person name="Nagahari K."/>
            <person name="Murakami K."/>
            <person name="Yasuda T."/>
            <person name="Iwayanagi T."/>
            <person name="Wagatsuma M."/>
            <person name="Shiratori A."/>
            <person name="Sudo H."/>
            <person name="Hosoiri T."/>
            <person name="Kaku Y."/>
            <person name="Kodaira H."/>
            <person name="Kondo H."/>
            <person name="Sugawara M."/>
            <person name="Takahashi M."/>
            <person name="Kanda K."/>
            <person name="Yokoi T."/>
            <person name="Furuya T."/>
            <person name="Kikkawa E."/>
            <person name="Omura Y."/>
            <person name="Abe K."/>
            <person name="Kamihara K."/>
            <person name="Katsuta N."/>
            <person name="Sato K."/>
            <person name="Tanikawa M."/>
            <person name="Yamazaki M."/>
            <person name="Ninomiya K."/>
            <person name="Ishibashi T."/>
            <person name="Yamashita H."/>
            <person name="Murakawa K."/>
            <person name="Fujimori K."/>
            <person name="Tanai H."/>
            <person name="Kimata M."/>
            <person name="Watanabe M."/>
            <person name="Hiraoka S."/>
            <person name="Chiba Y."/>
            <person name="Ishida S."/>
            <person name="Ono Y."/>
            <person name="Takiguchi S."/>
            <person name="Watanabe S."/>
            <person name="Yosida M."/>
            <person name="Hotuta T."/>
            <person name="Kusano J."/>
            <person name="Kanehori K."/>
            <person name="Takahashi-Fujii A."/>
            <person name="Hara H."/>
            <person name="Tanase T.-O."/>
            <person name="Nomura Y."/>
            <person name="Togiya S."/>
            <person name="Komai F."/>
            <person name="Hara R."/>
            <person name="Takeuchi K."/>
            <person name="Arita M."/>
            <person name="Imose N."/>
            <person name="Musashino K."/>
            <person name="Yuuki H."/>
            <person name="Oshima A."/>
            <person name="Sasaki N."/>
            <person name="Aotsuka S."/>
            <person name="Yoshikawa Y."/>
            <person name="Matsunawa H."/>
            <person name="Ichihara T."/>
            <person name="Shiohata N."/>
            <person name="Sano S."/>
            <person name="Moriya S."/>
            <person name="Momiyama H."/>
            <person name="Satoh N."/>
            <person name="Takami S."/>
            <person name="Terashima Y."/>
            <person name="Suzuki O."/>
            <person name="Nakagawa S."/>
            <person name="Senoh A."/>
            <person name="Mizoguchi H."/>
            <person name="Goto Y."/>
            <person name="Shimizu F."/>
            <person name="Wakebe H."/>
            <person name="Hishigaki H."/>
            <person name="Watanabe T."/>
            <person name="Sugiyama A."/>
            <person name="Takemoto M."/>
            <person name="Kawakami B."/>
            <person name="Yamazaki M."/>
            <person name="Watanabe K."/>
            <person name="Kumagai A."/>
            <person name="Itakura S."/>
            <person name="Fukuzumi Y."/>
            <person name="Fujimori Y."/>
            <person name="Komiyama M."/>
            <person name="Tashiro H."/>
            <person name="Tanigami A."/>
            <person name="Fujiwara T."/>
            <person name="Ono T."/>
            <person name="Yamada K."/>
            <person name="Fujii Y."/>
            <person name="Ozaki K."/>
            <person name="Hirao M."/>
            <person name="Ohmori Y."/>
            <person name="Kawabata A."/>
            <person name="Hikiji T."/>
            <person name="Kobatake N."/>
            <person name="Inagaki H."/>
            <person name="Ikema Y."/>
            <person name="Okamoto S."/>
            <person name="Okitani R."/>
            <person name="Kawakami T."/>
            <person name="Noguchi S."/>
            <person name="Itoh T."/>
            <person name="Shigeta K."/>
            <person name="Senba T."/>
            <person name="Matsumura K."/>
            <person name="Nakajima Y."/>
            <person name="Mizuno T."/>
            <person name="Morinaga M."/>
            <person name="Sasaki M."/>
            <person name="Togashi T."/>
            <person name="Oyama M."/>
            <person name="Hata H."/>
            <person name="Watanabe M."/>
            <person name="Komatsu T."/>
            <person name="Mizushima-Sugano J."/>
            <person name="Satoh T."/>
            <person name="Shirai Y."/>
            <person name="Takahashi Y."/>
            <person name="Nakagawa K."/>
            <person name="Okumura K."/>
            <person name="Nagase T."/>
            <person name="Nomura N."/>
            <person name="Kikuchi H."/>
            <person name="Masuho Y."/>
            <person name="Yamashita R."/>
            <person name="Nakai K."/>
            <person name="Yada T."/>
            <person name="Nakamura Y."/>
            <person name="Ohara O."/>
            <person name="Isogai T."/>
            <person name="Sugano S."/>
        </authorList>
    </citation>
    <scope>NUCLEOTIDE SEQUENCE [LARGE SCALE MRNA] (ISOFORMS 1; 5 AND 4)</scope>
    <source>
        <tissue>Carcinoma</tissue>
        <tissue>Testis</tissue>
        <tissue>Thymus</tissue>
    </source>
</reference>
<reference key="3">
    <citation type="journal article" date="2006" name="Nature">
        <title>The DNA sequence and biological annotation of human chromosome 1.</title>
        <authorList>
            <person name="Gregory S.G."/>
            <person name="Barlow K.F."/>
            <person name="McLay K.E."/>
            <person name="Kaul R."/>
            <person name="Swarbreck D."/>
            <person name="Dunham A."/>
            <person name="Scott C.E."/>
            <person name="Howe K.L."/>
            <person name="Woodfine K."/>
            <person name="Spencer C.C.A."/>
            <person name="Jones M.C."/>
            <person name="Gillson C."/>
            <person name="Searle S."/>
            <person name="Zhou Y."/>
            <person name="Kokocinski F."/>
            <person name="McDonald L."/>
            <person name="Evans R."/>
            <person name="Phillips K."/>
            <person name="Atkinson A."/>
            <person name="Cooper R."/>
            <person name="Jones C."/>
            <person name="Hall R.E."/>
            <person name="Andrews T.D."/>
            <person name="Lloyd C."/>
            <person name="Ainscough R."/>
            <person name="Almeida J.P."/>
            <person name="Ambrose K.D."/>
            <person name="Anderson F."/>
            <person name="Andrew R.W."/>
            <person name="Ashwell R.I.S."/>
            <person name="Aubin K."/>
            <person name="Babbage A.K."/>
            <person name="Bagguley C.L."/>
            <person name="Bailey J."/>
            <person name="Beasley H."/>
            <person name="Bethel G."/>
            <person name="Bird C.P."/>
            <person name="Bray-Allen S."/>
            <person name="Brown J.Y."/>
            <person name="Brown A.J."/>
            <person name="Buckley D."/>
            <person name="Burton J."/>
            <person name="Bye J."/>
            <person name="Carder C."/>
            <person name="Chapman J.C."/>
            <person name="Clark S.Y."/>
            <person name="Clarke G."/>
            <person name="Clee C."/>
            <person name="Cobley V."/>
            <person name="Collier R.E."/>
            <person name="Corby N."/>
            <person name="Coville G.J."/>
            <person name="Davies J."/>
            <person name="Deadman R."/>
            <person name="Dunn M."/>
            <person name="Earthrowl M."/>
            <person name="Ellington A.G."/>
            <person name="Errington H."/>
            <person name="Frankish A."/>
            <person name="Frankland J."/>
            <person name="French L."/>
            <person name="Garner P."/>
            <person name="Garnett J."/>
            <person name="Gay L."/>
            <person name="Ghori M.R.J."/>
            <person name="Gibson R."/>
            <person name="Gilby L.M."/>
            <person name="Gillett W."/>
            <person name="Glithero R.J."/>
            <person name="Grafham D.V."/>
            <person name="Griffiths C."/>
            <person name="Griffiths-Jones S."/>
            <person name="Grocock R."/>
            <person name="Hammond S."/>
            <person name="Harrison E.S.I."/>
            <person name="Hart E."/>
            <person name="Haugen E."/>
            <person name="Heath P.D."/>
            <person name="Holmes S."/>
            <person name="Holt K."/>
            <person name="Howden P.J."/>
            <person name="Hunt A.R."/>
            <person name="Hunt S.E."/>
            <person name="Hunter G."/>
            <person name="Isherwood J."/>
            <person name="James R."/>
            <person name="Johnson C."/>
            <person name="Johnson D."/>
            <person name="Joy A."/>
            <person name="Kay M."/>
            <person name="Kershaw J.K."/>
            <person name="Kibukawa M."/>
            <person name="Kimberley A.M."/>
            <person name="King A."/>
            <person name="Knights A.J."/>
            <person name="Lad H."/>
            <person name="Laird G."/>
            <person name="Lawlor S."/>
            <person name="Leongamornlert D.A."/>
            <person name="Lloyd D.M."/>
            <person name="Loveland J."/>
            <person name="Lovell J."/>
            <person name="Lush M.J."/>
            <person name="Lyne R."/>
            <person name="Martin S."/>
            <person name="Mashreghi-Mohammadi M."/>
            <person name="Matthews L."/>
            <person name="Matthews N.S.W."/>
            <person name="McLaren S."/>
            <person name="Milne S."/>
            <person name="Mistry S."/>
            <person name="Moore M.J.F."/>
            <person name="Nickerson T."/>
            <person name="O'Dell C.N."/>
            <person name="Oliver K."/>
            <person name="Palmeiri A."/>
            <person name="Palmer S.A."/>
            <person name="Parker A."/>
            <person name="Patel D."/>
            <person name="Pearce A.V."/>
            <person name="Peck A.I."/>
            <person name="Pelan S."/>
            <person name="Phelps K."/>
            <person name="Phillimore B.J."/>
            <person name="Plumb R."/>
            <person name="Rajan J."/>
            <person name="Raymond C."/>
            <person name="Rouse G."/>
            <person name="Saenphimmachak C."/>
            <person name="Sehra H.K."/>
            <person name="Sheridan E."/>
            <person name="Shownkeen R."/>
            <person name="Sims S."/>
            <person name="Skuce C.D."/>
            <person name="Smith M."/>
            <person name="Steward C."/>
            <person name="Subramanian S."/>
            <person name="Sycamore N."/>
            <person name="Tracey A."/>
            <person name="Tromans A."/>
            <person name="Van Helmond Z."/>
            <person name="Wall M."/>
            <person name="Wallis J.M."/>
            <person name="White S."/>
            <person name="Whitehead S.L."/>
            <person name="Wilkinson J.E."/>
            <person name="Willey D.L."/>
            <person name="Williams H."/>
            <person name="Wilming L."/>
            <person name="Wray P.W."/>
            <person name="Wu Z."/>
            <person name="Coulson A."/>
            <person name="Vaudin M."/>
            <person name="Sulston J.E."/>
            <person name="Durbin R.M."/>
            <person name="Hubbard T."/>
            <person name="Wooster R."/>
            <person name="Dunham I."/>
            <person name="Carter N.P."/>
            <person name="McVean G."/>
            <person name="Ross M.T."/>
            <person name="Harrow J."/>
            <person name="Olson M.V."/>
            <person name="Beck S."/>
            <person name="Rogers J."/>
            <person name="Bentley D.R."/>
        </authorList>
    </citation>
    <scope>NUCLEOTIDE SEQUENCE [LARGE SCALE GENOMIC DNA]</scope>
</reference>
<reference key="4">
    <citation type="journal article" date="2004" name="Genome Res.">
        <title>The status, quality, and expansion of the NIH full-length cDNA project: the Mammalian Gene Collection (MGC).</title>
        <authorList>
            <consortium name="The MGC Project Team"/>
        </authorList>
    </citation>
    <scope>NUCLEOTIDE SEQUENCE [LARGE SCALE MRNA] (ISOFORM 2)</scope>
    <source>
        <tissue>Uterus</tissue>
    </source>
</reference>
<dbReference type="EMBL" id="AY358490">
    <property type="protein sequence ID" value="AAQ88854.1"/>
    <property type="molecule type" value="mRNA"/>
</dbReference>
<dbReference type="EMBL" id="AK000591">
    <property type="protein sequence ID" value="BAA91276.1"/>
    <property type="molecule type" value="mRNA"/>
</dbReference>
<dbReference type="EMBL" id="AK057368">
    <property type="protein sequence ID" value="BAG51908.1"/>
    <property type="molecule type" value="mRNA"/>
</dbReference>
<dbReference type="EMBL" id="AK128434">
    <property type="protein sequence ID" value="BAC87438.1"/>
    <property type="molecule type" value="mRNA"/>
</dbReference>
<dbReference type="EMBL" id="AL390719">
    <property type="status" value="NOT_ANNOTATED_CDS"/>
    <property type="molecule type" value="Genomic_DNA"/>
</dbReference>
<dbReference type="EMBL" id="BC008788">
    <property type="protein sequence ID" value="AAH08788.1"/>
    <property type="molecule type" value="mRNA"/>
</dbReference>
<dbReference type="CCDS" id="CCDS7.2">
    <molecule id="Q96HA4-4"/>
</dbReference>
<dbReference type="CCDS" id="CCDS81250.1">
    <molecule id="Q96HA4-1"/>
</dbReference>
<dbReference type="RefSeq" id="NP_001317235.1">
    <molecule id="Q96HA4-1"/>
    <property type="nucleotide sequence ID" value="NM_001330306.2"/>
</dbReference>
<dbReference type="RefSeq" id="NP_060361.4">
    <molecule id="Q96HA4-4"/>
    <property type="nucleotide sequence ID" value="NM_017891.4"/>
</dbReference>
<dbReference type="RefSeq" id="XP_011539963.1">
    <property type="nucleotide sequence ID" value="XM_011541661.2"/>
</dbReference>
<dbReference type="RefSeq" id="XP_011539964.1">
    <property type="nucleotide sequence ID" value="XM_011541662.2"/>
</dbReference>
<dbReference type="RefSeq" id="XP_016857065.1">
    <property type="nucleotide sequence ID" value="XM_017001576.1"/>
</dbReference>
<dbReference type="BioGRID" id="120325">
    <property type="interactions" value="12"/>
</dbReference>
<dbReference type="FunCoup" id="Q96HA4">
    <property type="interactions" value="408"/>
</dbReference>
<dbReference type="IntAct" id="Q96HA4">
    <property type="interactions" value="9"/>
</dbReference>
<dbReference type="STRING" id="9606.ENSP00000368644"/>
<dbReference type="GlyCosmos" id="Q96HA4">
    <property type="glycosylation" value="3 sites, No reported glycans"/>
</dbReference>
<dbReference type="GlyGen" id="Q96HA4">
    <property type="glycosylation" value="6 sites, 3 N-linked glycans (3 sites)"/>
</dbReference>
<dbReference type="iPTMnet" id="Q96HA4"/>
<dbReference type="PhosphoSitePlus" id="Q96HA4"/>
<dbReference type="BioMuta" id="C1orf159"/>
<dbReference type="DMDM" id="119371554"/>
<dbReference type="jPOST" id="Q96HA4"/>
<dbReference type="MassIVE" id="Q96HA4"/>
<dbReference type="PeptideAtlas" id="Q96HA4"/>
<dbReference type="ProteomicsDB" id="76718">
    <molecule id="Q96HA4-1"/>
</dbReference>
<dbReference type="ProteomicsDB" id="76719">
    <molecule id="Q96HA4-2"/>
</dbReference>
<dbReference type="ProteomicsDB" id="76720">
    <molecule id="Q96HA4-3"/>
</dbReference>
<dbReference type="ProteomicsDB" id="76721">
    <molecule id="Q96HA4-4"/>
</dbReference>
<dbReference type="ProteomicsDB" id="76722">
    <molecule id="Q96HA4-5"/>
</dbReference>
<dbReference type="Pumba" id="Q96HA4"/>
<dbReference type="Antibodypedia" id="2435">
    <property type="antibodies" value="108 antibodies from 13 providers"/>
</dbReference>
<dbReference type="DNASU" id="54991"/>
<dbReference type="Ensembl" id="ENST00000379319.5">
    <molecule id="Q96HA4-4"/>
    <property type="protein sequence ID" value="ENSP00000368623.1"/>
    <property type="gene ID" value="ENSG00000131591.18"/>
</dbReference>
<dbReference type="Ensembl" id="ENST00000379325.7">
    <molecule id="Q96HA4-3"/>
    <property type="protein sequence ID" value="ENSP00000368629.3"/>
    <property type="gene ID" value="ENSG00000131591.18"/>
</dbReference>
<dbReference type="Ensembl" id="ENST00000379339.5">
    <molecule id="Q96HA4-1"/>
    <property type="protein sequence ID" value="ENSP00000368644.1"/>
    <property type="gene ID" value="ENSG00000131591.18"/>
</dbReference>
<dbReference type="Ensembl" id="ENST00000421241.7">
    <molecule id="Q96HA4-4"/>
    <property type="protein sequence ID" value="ENSP00000400736.2"/>
    <property type="gene ID" value="ENSG00000131591.18"/>
</dbReference>
<dbReference type="GeneID" id="54991"/>
<dbReference type="KEGG" id="hsa:54991"/>
<dbReference type="MANE-Select" id="ENST00000421241.7">
    <molecule id="Q96HA4-4"/>
    <property type="protein sequence ID" value="ENSP00000400736.2"/>
    <property type="RefSeq nucleotide sequence ID" value="NM_017891.5"/>
    <property type="RefSeq protein sequence ID" value="NP_060361.4"/>
</dbReference>
<dbReference type="UCSC" id="uc001act.3">
    <molecule id="Q96HA4-1"/>
    <property type="organism name" value="human"/>
</dbReference>
<dbReference type="AGR" id="HGNC:26062"/>
<dbReference type="CTD" id="54991"/>
<dbReference type="GeneCards" id="C1orf159"/>
<dbReference type="HGNC" id="HGNC:26062">
    <property type="gene designation" value="C1orf159"/>
</dbReference>
<dbReference type="HPA" id="ENSG00000131591">
    <property type="expression patterns" value="Tissue enhanced (testis)"/>
</dbReference>
<dbReference type="neXtProt" id="NX_Q96HA4"/>
<dbReference type="OpenTargets" id="ENSG00000131591"/>
<dbReference type="PharmGKB" id="PA142672410"/>
<dbReference type="VEuPathDB" id="HostDB:ENSG00000131591"/>
<dbReference type="GeneTree" id="ENSGT00390000009794"/>
<dbReference type="HOGENOM" id="CLU_069381_1_0_1"/>
<dbReference type="InParanoid" id="Q96HA4"/>
<dbReference type="OMA" id="EKQRVNN"/>
<dbReference type="OrthoDB" id="9895472at2759"/>
<dbReference type="PAN-GO" id="Q96HA4">
    <property type="GO annotations" value="0 GO annotations based on evolutionary models"/>
</dbReference>
<dbReference type="PhylomeDB" id="Q96HA4"/>
<dbReference type="TreeFam" id="TF330740"/>
<dbReference type="PathwayCommons" id="Q96HA4"/>
<dbReference type="SignaLink" id="Q96HA4"/>
<dbReference type="BioGRID-ORCS" id="54991">
    <property type="hits" value="14 hits in 1146 CRISPR screens"/>
</dbReference>
<dbReference type="ChiTaRS" id="C1orf159">
    <property type="organism name" value="human"/>
</dbReference>
<dbReference type="GenomeRNAi" id="54991"/>
<dbReference type="Pharos" id="Q96HA4">
    <property type="development level" value="Tdark"/>
</dbReference>
<dbReference type="PRO" id="PR:Q96HA4"/>
<dbReference type="Proteomes" id="UP000005640">
    <property type="component" value="Chromosome 1"/>
</dbReference>
<dbReference type="RNAct" id="Q96HA4">
    <property type="molecule type" value="protein"/>
</dbReference>
<dbReference type="Bgee" id="ENSG00000131591">
    <property type="expression patterns" value="Expressed in left testis and 98 other cell types or tissues"/>
</dbReference>
<dbReference type="ExpressionAtlas" id="Q96HA4">
    <property type="expression patterns" value="baseline and differential"/>
</dbReference>
<dbReference type="GO" id="GO:0016020">
    <property type="term" value="C:membrane"/>
    <property type="evidence" value="ECO:0007669"/>
    <property type="project" value="UniProtKB-SubCell"/>
</dbReference>
<dbReference type="InterPro" id="IPR027888">
    <property type="entry name" value="DUF4501"/>
</dbReference>
<dbReference type="PANTHER" id="PTHR16247">
    <property type="entry name" value="RIKEN CDNA 9430015G10 GENE"/>
    <property type="match status" value="1"/>
</dbReference>
<dbReference type="PANTHER" id="PTHR16247:SF0">
    <property type="entry name" value="RIKEN CDNA 9430015G10 GENE"/>
    <property type="match status" value="1"/>
</dbReference>
<dbReference type="Pfam" id="PF14946">
    <property type="entry name" value="DUF4501"/>
    <property type="match status" value="1"/>
</dbReference>
<protein>
    <recommendedName>
        <fullName>Uncharacterized protein C1orf159</fullName>
    </recommendedName>
</protein>
<accession>Q96HA4</accession>
<accession>B3KQ46</accession>
<accession>Q5T2W6</accession>
<accession>Q6UX67</accession>
<accession>Q6ZR77</accession>
<accession>Q9NWV0</accession>
<gene>
    <name type="primary">C1orf159</name>
    <name type="ORF">UNQ2998/PRO9739</name>
</gene>